<feature type="chain" id="PRO_0000183516" description="Cytochrome c oxidase subunit 2">
    <location>
        <begin position="1"/>
        <end position="227"/>
    </location>
</feature>
<feature type="topological domain" description="Mitochondrial intermembrane" evidence="4">
    <location>
        <begin position="1"/>
        <end position="14"/>
    </location>
</feature>
<feature type="transmembrane region" description="Helical; Name=I" evidence="4">
    <location>
        <begin position="15"/>
        <end position="45"/>
    </location>
</feature>
<feature type="topological domain" description="Mitochondrial matrix" evidence="4">
    <location>
        <begin position="46"/>
        <end position="59"/>
    </location>
</feature>
<feature type="transmembrane region" description="Helical; Name=II" evidence="4">
    <location>
        <begin position="60"/>
        <end position="87"/>
    </location>
</feature>
<feature type="topological domain" description="Mitochondrial intermembrane" evidence="4">
    <location>
        <begin position="88"/>
        <end position="227"/>
    </location>
</feature>
<feature type="binding site" evidence="4">
    <location>
        <position position="161"/>
    </location>
    <ligand>
        <name>Cu cation</name>
        <dbReference type="ChEBI" id="CHEBI:23378"/>
        <label>A1</label>
    </ligand>
</feature>
<feature type="binding site" evidence="4">
    <location>
        <position position="196"/>
    </location>
    <ligand>
        <name>Cu cation</name>
        <dbReference type="ChEBI" id="CHEBI:23378"/>
        <label>A1</label>
    </ligand>
</feature>
<feature type="binding site" evidence="4">
    <location>
        <position position="196"/>
    </location>
    <ligand>
        <name>Cu cation</name>
        <dbReference type="ChEBI" id="CHEBI:23378"/>
        <label>A2</label>
    </ligand>
</feature>
<feature type="binding site" evidence="4">
    <location>
        <position position="198"/>
    </location>
    <ligand>
        <name>Cu cation</name>
        <dbReference type="ChEBI" id="CHEBI:23378"/>
        <label>A2</label>
    </ligand>
</feature>
<feature type="binding site" evidence="4">
    <location>
        <position position="198"/>
    </location>
    <ligand>
        <name>Mg(2+)</name>
        <dbReference type="ChEBI" id="CHEBI:18420"/>
        <note>ligand shared with MT-CO1</note>
    </ligand>
</feature>
<feature type="binding site" evidence="4">
    <location>
        <position position="200"/>
    </location>
    <ligand>
        <name>Cu cation</name>
        <dbReference type="ChEBI" id="CHEBI:23378"/>
        <label>A1</label>
    </ligand>
</feature>
<feature type="binding site" evidence="4">
    <location>
        <position position="200"/>
    </location>
    <ligand>
        <name>Cu cation</name>
        <dbReference type="ChEBI" id="CHEBI:23378"/>
        <label>A2</label>
    </ligand>
</feature>
<feature type="binding site" evidence="4">
    <location>
        <position position="204"/>
    </location>
    <ligand>
        <name>Cu cation</name>
        <dbReference type="ChEBI" id="CHEBI:23378"/>
        <label>A2</label>
    </ligand>
</feature>
<feature type="binding site" evidence="4">
    <location>
        <position position="207"/>
    </location>
    <ligand>
        <name>Cu cation</name>
        <dbReference type="ChEBI" id="CHEBI:23378"/>
        <label>A1</label>
    </ligand>
</feature>
<feature type="modified residue" description="Phosphotyrosine" evidence="2">
    <location>
        <position position="218"/>
    </location>
</feature>
<gene>
    <name type="primary">MT-CO2</name>
    <name type="synonym">COII</name>
    <name type="synonym">COX2</name>
    <name type="synonym">COXII</name>
    <name type="synonym">MTCO2</name>
</gene>
<organism>
    <name type="scientific">Boselaphus tragocamelus</name>
    <name type="common">Nilgai</name>
    <dbReference type="NCBI Taxonomy" id="9917"/>
    <lineage>
        <taxon>Eukaryota</taxon>
        <taxon>Metazoa</taxon>
        <taxon>Chordata</taxon>
        <taxon>Craniata</taxon>
        <taxon>Vertebrata</taxon>
        <taxon>Euteleostomi</taxon>
        <taxon>Mammalia</taxon>
        <taxon>Eutheria</taxon>
        <taxon>Laurasiatheria</taxon>
        <taxon>Artiodactyla</taxon>
        <taxon>Ruminantia</taxon>
        <taxon>Pecora</taxon>
        <taxon>Bovidae</taxon>
        <taxon>Bovinae</taxon>
        <taxon>Boselaphus</taxon>
    </lineage>
</organism>
<sequence length="227" mass="26080">MAYPMQLGFQDATSPIMEELLHFHDHTLMIVFLISSLVLYIISLMLTTKLTHTSTMDAQEVETIWTILPAIILILIALPSLRILYMMDEINNPSLTVKTMGHQWYWSYEYTDYEDLSFDSYMIPTSELKPGELRLLEVDNRVVLPMEMTIRMLISSEDVLHSWTVPSLGLKTDAIPGRLNQTTLMSTRPGLYYGQCSEICGSNHSFMPIVLELVPLKYFEKWSASML</sequence>
<reference key="1">
    <citation type="journal article" date="1996" name="Mol. Phylogenet. Evol.">
        <title>Mitochondrial gene sequences and the molecular systematics of the artiodactyl subfamily bovinae.</title>
        <authorList>
            <person name="Janecek L.L."/>
            <person name="Honeycutt R.L."/>
            <person name="Adkins R.M."/>
            <person name="Davis S.K."/>
        </authorList>
    </citation>
    <scope>NUCLEOTIDE SEQUENCE [GENOMIC DNA]</scope>
</reference>
<evidence type="ECO:0000250" key="1">
    <source>
        <dbReference type="UniProtKB" id="P00403"/>
    </source>
</evidence>
<evidence type="ECO:0000250" key="2">
    <source>
        <dbReference type="UniProtKB" id="P00406"/>
    </source>
</evidence>
<evidence type="ECO:0000250" key="3">
    <source>
        <dbReference type="UniProtKB" id="P00410"/>
    </source>
</evidence>
<evidence type="ECO:0000250" key="4">
    <source>
        <dbReference type="UniProtKB" id="P68530"/>
    </source>
</evidence>
<evidence type="ECO:0000305" key="5"/>
<dbReference type="EC" id="7.1.1.9"/>
<dbReference type="EMBL" id="U62566">
    <property type="protein sequence ID" value="AAB05781.1"/>
    <property type="molecule type" value="Genomic_DNA"/>
</dbReference>
<dbReference type="RefSeq" id="YP_007624941.1">
    <property type="nucleotide sequence ID" value="NC_020614.1"/>
</dbReference>
<dbReference type="SMR" id="Q37419"/>
<dbReference type="GeneID" id="14841478"/>
<dbReference type="CTD" id="4513"/>
<dbReference type="GO" id="GO:0005743">
    <property type="term" value="C:mitochondrial inner membrane"/>
    <property type="evidence" value="ECO:0007669"/>
    <property type="project" value="UniProtKB-SubCell"/>
</dbReference>
<dbReference type="GO" id="GO:0045277">
    <property type="term" value="C:respiratory chain complex IV"/>
    <property type="evidence" value="ECO:0000250"/>
    <property type="project" value="UniProtKB"/>
</dbReference>
<dbReference type="GO" id="GO:0005507">
    <property type="term" value="F:copper ion binding"/>
    <property type="evidence" value="ECO:0007669"/>
    <property type="project" value="InterPro"/>
</dbReference>
<dbReference type="GO" id="GO:0004129">
    <property type="term" value="F:cytochrome-c oxidase activity"/>
    <property type="evidence" value="ECO:0007669"/>
    <property type="project" value="UniProtKB-EC"/>
</dbReference>
<dbReference type="GO" id="GO:0042773">
    <property type="term" value="P:ATP synthesis coupled electron transport"/>
    <property type="evidence" value="ECO:0007669"/>
    <property type="project" value="TreeGrafter"/>
</dbReference>
<dbReference type="CDD" id="cd13912">
    <property type="entry name" value="CcO_II_C"/>
    <property type="match status" value="1"/>
</dbReference>
<dbReference type="FunFam" id="1.10.287.90:FF:000001">
    <property type="entry name" value="Cytochrome c oxidase subunit 2"/>
    <property type="match status" value="1"/>
</dbReference>
<dbReference type="FunFam" id="2.60.40.420:FF:000001">
    <property type="entry name" value="Cytochrome c oxidase subunit 2"/>
    <property type="match status" value="1"/>
</dbReference>
<dbReference type="Gene3D" id="1.10.287.90">
    <property type="match status" value="1"/>
</dbReference>
<dbReference type="Gene3D" id="2.60.40.420">
    <property type="entry name" value="Cupredoxins - blue copper proteins"/>
    <property type="match status" value="1"/>
</dbReference>
<dbReference type="InterPro" id="IPR045187">
    <property type="entry name" value="CcO_II"/>
</dbReference>
<dbReference type="InterPro" id="IPR002429">
    <property type="entry name" value="CcO_II-like_C"/>
</dbReference>
<dbReference type="InterPro" id="IPR034210">
    <property type="entry name" value="CcO_II_C"/>
</dbReference>
<dbReference type="InterPro" id="IPR001505">
    <property type="entry name" value="Copper_CuA"/>
</dbReference>
<dbReference type="InterPro" id="IPR008972">
    <property type="entry name" value="Cupredoxin"/>
</dbReference>
<dbReference type="InterPro" id="IPR014222">
    <property type="entry name" value="Cyt_c_oxidase_su2"/>
</dbReference>
<dbReference type="InterPro" id="IPR011759">
    <property type="entry name" value="Cyt_c_oxidase_su2_TM_dom"/>
</dbReference>
<dbReference type="InterPro" id="IPR036257">
    <property type="entry name" value="Cyt_c_oxidase_su2_TM_sf"/>
</dbReference>
<dbReference type="NCBIfam" id="TIGR02866">
    <property type="entry name" value="CoxB"/>
    <property type="match status" value="1"/>
</dbReference>
<dbReference type="PANTHER" id="PTHR22888:SF9">
    <property type="entry name" value="CYTOCHROME C OXIDASE SUBUNIT 2"/>
    <property type="match status" value="1"/>
</dbReference>
<dbReference type="PANTHER" id="PTHR22888">
    <property type="entry name" value="CYTOCHROME C OXIDASE, SUBUNIT II"/>
    <property type="match status" value="1"/>
</dbReference>
<dbReference type="Pfam" id="PF00116">
    <property type="entry name" value="COX2"/>
    <property type="match status" value="1"/>
</dbReference>
<dbReference type="Pfam" id="PF02790">
    <property type="entry name" value="COX2_TM"/>
    <property type="match status" value="1"/>
</dbReference>
<dbReference type="PRINTS" id="PR01166">
    <property type="entry name" value="CYCOXIDASEII"/>
</dbReference>
<dbReference type="SUPFAM" id="SSF49503">
    <property type="entry name" value="Cupredoxins"/>
    <property type="match status" value="1"/>
</dbReference>
<dbReference type="SUPFAM" id="SSF81464">
    <property type="entry name" value="Cytochrome c oxidase subunit II-like, transmembrane region"/>
    <property type="match status" value="1"/>
</dbReference>
<dbReference type="PROSITE" id="PS00078">
    <property type="entry name" value="COX2"/>
    <property type="match status" value="1"/>
</dbReference>
<dbReference type="PROSITE" id="PS50857">
    <property type="entry name" value="COX2_CUA"/>
    <property type="match status" value="1"/>
</dbReference>
<dbReference type="PROSITE" id="PS50999">
    <property type="entry name" value="COX2_TM"/>
    <property type="match status" value="1"/>
</dbReference>
<keyword id="KW-0186">Copper</keyword>
<keyword id="KW-0249">Electron transport</keyword>
<keyword id="KW-0460">Magnesium</keyword>
<keyword id="KW-0472">Membrane</keyword>
<keyword id="KW-0479">Metal-binding</keyword>
<keyword id="KW-0496">Mitochondrion</keyword>
<keyword id="KW-0999">Mitochondrion inner membrane</keyword>
<keyword id="KW-0597">Phosphoprotein</keyword>
<keyword id="KW-0679">Respiratory chain</keyword>
<keyword id="KW-1278">Translocase</keyword>
<keyword id="KW-0812">Transmembrane</keyword>
<keyword id="KW-1133">Transmembrane helix</keyword>
<keyword id="KW-0813">Transport</keyword>
<name>COX2_BOSTR</name>
<protein>
    <recommendedName>
        <fullName>Cytochrome c oxidase subunit 2</fullName>
        <ecNumber>7.1.1.9</ecNumber>
    </recommendedName>
    <alternativeName>
        <fullName>Cytochrome c oxidase polypeptide II</fullName>
    </alternativeName>
</protein>
<proteinExistence type="inferred from homology"/>
<comment type="function">
    <text evidence="3">Component of the cytochrome c oxidase, the last enzyme in the mitochondrial electron transport chain which drives oxidative phosphorylation. The respiratory chain contains 3 multisubunit complexes succinate dehydrogenase (complex II, CII), ubiquinol-cytochrome c oxidoreductase (cytochrome b-c1 complex, complex III, CIII) and cytochrome c oxidase (complex IV, CIV), that cooperate to transfer electrons derived from NADH and succinate to molecular oxygen, creating an electrochemical gradient over the inner membrane that drives transmembrane transport and the ATP synthase. Cytochrome c oxidase is the component of the respiratory chain that catalyzes the reduction of oxygen to water. Electrons originating from reduced cytochrome c in the intermembrane space (IMS) are transferred via the dinuclear copper A center (CU(A)) of subunit 2 and heme A of subunit 1 to the active site in subunit 1, a binuclear center (BNC) formed by heme A3 and copper B (CU(B)). The BNC reduces molecular oxygen to 2 water molecules using 4 electrons from cytochrome c in the IMS and 4 protons from the mitochondrial matrix.</text>
</comment>
<comment type="catalytic activity">
    <reaction evidence="3">
        <text>4 Fe(II)-[cytochrome c] + O2 + 8 H(+)(in) = 4 Fe(III)-[cytochrome c] + 2 H2O + 4 H(+)(out)</text>
        <dbReference type="Rhea" id="RHEA:11436"/>
        <dbReference type="Rhea" id="RHEA-COMP:10350"/>
        <dbReference type="Rhea" id="RHEA-COMP:14399"/>
        <dbReference type="ChEBI" id="CHEBI:15377"/>
        <dbReference type="ChEBI" id="CHEBI:15378"/>
        <dbReference type="ChEBI" id="CHEBI:15379"/>
        <dbReference type="ChEBI" id="CHEBI:29033"/>
        <dbReference type="ChEBI" id="CHEBI:29034"/>
        <dbReference type="EC" id="7.1.1.9"/>
    </reaction>
    <physiologicalReaction direction="left-to-right" evidence="3">
        <dbReference type="Rhea" id="RHEA:11437"/>
    </physiologicalReaction>
</comment>
<comment type="cofactor">
    <cofactor evidence="4">
        <name>Cu cation</name>
        <dbReference type="ChEBI" id="CHEBI:23378"/>
    </cofactor>
    <text evidence="4">Binds a dinuclear copper A center per subunit.</text>
</comment>
<comment type="subunit">
    <text evidence="1 4">Component of the cytochrome c oxidase (complex IV, CIV), a multisubunit enzyme composed of 14 subunits. The complex is composed of a catalytic core of 3 subunits MT-CO1, MT-CO2 and MT-CO3, encoded in the mitochondrial DNA, and 11 supernumerary subunits COX4I, COX5A, COX5B, COX6A, COX6B, COX6C, COX7A, COX7B, COX7C, COX8 and NDUFA4, which are encoded in the nuclear genome. The complex exists as a monomer or a dimer and forms supercomplexes (SCs) in the inner mitochondrial membrane with NADH-ubiquinone oxidoreductase (complex I, CI) and ubiquinol-cytochrome c oxidoreductase (cytochrome b-c1 complex, complex III, CIII), resulting in different assemblies (supercomplex SCI(1)III(2)IV(1) and megacomplex MCI(2)III(2)IV(2)) (By similarity). Found in a complex with TMEM177, COA6, COX18, COX20, SCO1 and SCO2. Interacts with TMEM177 in a COX20-dependent manner. Interacts with COX20. Interacts with COX16 (By similarity).</text>
</comment>
<comment type="subcellular location">
    <subcellularLocation>
        <location evidence="4">Mitochondrion inner membrane</location>
        <topology evidence="4">Multi-pass membrane protein</topology>
    </subcellularLocation>
</comment>
<comment type="similarity">
    <text evidence="5">Belongs to the cytochrome c oxidase subunit 2 family.</text>
</comment>
<geneLocation type="mitochondrion"/>
<accession>Q37419</accession>